<name>RR14_TUPAK</name>
<evidence type="ECO:0000255" key="1">
    <source>
        <dbReference type="HAMAP-Rule" id="MF_00537"/>
    </source>
</evidence>
<evidence type="ECO:0000305" key="2"/>
<reference key="1">
    <citation type="journal article" date="2005" name="Mol. Biol. Evol.">
        <title>The chloroplast genome sequence of the green alga Pseudendoclonium akinetum (Ulvophyceae) reveals unusual structural features and new insights into the branching order of chlorophyte lineages.</title>
        <authorList>
            <person name="Pombert J.-F."/>
            <person name="Otis C."/>
            <person name="Lemieux C."/>
            <person name="Turmel M."/>
        </authorList>
    </citation>
    <scope>NUCLEOTIDE SEQUENCE [LARGE SCALE GENOMIC DNA]</scope>
    <source>
        <strain>UTEX 1912</strain>
    </source>
</reference>
<organism>
    <name type="scientific">Tupiella akineta</name>
    <name type="common">Green alga</name>
    <name type="synonym">Pseudendoclonium akinetum</name>
    <dbReference type="NCBI Taxonomy" id="160070"/>
    <lineage>
        <taxon>Eukaryota</taxon>
        <taxon>Viridiplantae</taxon>
        <taxon>Chlorophyta</taxon>
        <taxon>Ulvophyceae</taxon>
        <taxon>OUU clade</taxon>
        <taxon>Ulotrichales</taxon>
        <taxon>Tupiellaceae</taxon>
        <taxon>Tupiella</taxon>
    </lineage>
</organism>
<protein>
    <recommendedName>
        <fullName evidence="1">Small ribosomal subunit protein uS14c</fullName>
    </recommendedName>
    <alternativeName>
        <fullName evidence="2">30S ribosomal protein S14, chloroplastic</fullName>
    </alternativeName>
</protein>
<geneLocation type="chloroplast"/>
<gene>
    <name evidence="1" type="primary">rps14</name>
</gene>
<keyword id="KW-0150">Chloroplast</keyword>
<keyword id="KW-0934">Plastid</keyword>
<keyword id="KW-0687">Ribonucleoprotein</keyword>
<keyword id="KW-0689">Ribosomal protein</keyword>
<keyword id="KW-0694">RNA-binding</keyword>
<keyword id="KW-0699">rRNA-binding</keyword>
<accession>Q3ZJ23</accession>
<dbReference type="EMBL" id="AY835431">
    <property type="protein sequence ID" value="AAV80666.1"/>
    <property type="molecule type" value="Genomic_DNA"/>
</dbReference>
<dbReference type="RefSeq" id="YP_636244.1">
    <property type="nucleotide sequence ID" value="NC_008114.1"/>
</dbReference>
<dbReference type="SMR" id="Q3ZJ23"/>
<dbReference type="GeneID" id="4108709"/>
<dbReference type="GO" id="GO:0009507">
    <property type="term" value="C:chloroplast"/>
    <property type="evidence" value="ECO:0007669"/>
    <property type="project" value="UniProtKB-SubCell"/>
</dbReference>
<dbReference type="GO" id="GO:0015935">
    <property type="term" value="C:small ribosomal subunit"/>
    <property type="evidence" value="ECO:0007669"/>
    <property type="project" value="TreeGrafter"/>
</dbReference>
<dbReference type="GO" id="GO:0019843">
    <property type="term" value="F:rRNA binding"/>
    <property type="evidence" value="ECO:0007669"/>
    <property type="project" value="UniProtKB-UniRule"/>
</dbReference>
<dbReference type="GO" id="GO:0003735">
    <property type="term" value="F:structural constituent of ribosome"/>
    <property type="evidence" value="ECO:0007669"/>
    <property type="project" value="InterPro"/>
</dbReference>
<dbReference type="GO" id="GO:0006412">
    <property type="term" value="P:translation"/>
    <property type="evidence" value="ECO:0007669"/>
    <property type="project" value="UniProtKB-UniRule"/>
</dbReference>
<dbReference type="FunFam" id="1.10.287.1480:FF:000001">
    <property type="entry name" value="30S ribosomal protein S14"/>
    <property type="match status" value="1"/>
</dbReference>
<dbReference type="Gene3D" id="1.10.287.1480">
    <property type="match status" value="1"/>
</dbReference>
<dbReference type="HAMAP" id="MF_00537">
    <property type="entry name" value="Ribosomal_uS14_1"/>
    <property type="match status" value="1"/>
</dbReference>
<dbReference type="InterPro" id="IPR001209">
    <property type="entry name" value="Ribosomal_uS14"/>
</dbReference>
<dbReference type="InterPro" id="IPR023036">
    <property type="entry name" value="Ribosomal_uS14_bac/plastid"/>
</dbReference>
<dbReference type="InterPro" id="IPR018271">
    <property type="entry name" value="Ribosomal_uS14_CS"/>
</dbReference>
<dbReference type="NCBIfam" id="NF006477">
    <property type="entry name" value="PRK08881.1"/>
    <property type="match status" value="1"/>
</dbReference>
<dbReference type="PANTHER" id="PTHR19836">
    <property type="entry name" value="30S RIBOSOMAL PROTEIN S14"/>
    <property type="match status" value="1"/>
</dbReference>
<dbReference type="PANTHER" id="PTHR19836:SF19">
    <property type="entry name" value="SMALL RIBOSOMAL SUBUNIT PROTEIN US14M"/>
    <property type="match status" value="1"/>
</dbReference>
<dbReference type="Pfam" id="PF00253">
    <property type="entry name" value="Ribosomal_S14"/>
    <property type="match status" value="1"/>
</dbReference>
<dbReference type="SUPFAM" id="SSF57716">
    <property type="entry name" value="Glucocorticoid receptor-like (DNA-binding domain)"/>
    <property type="match status" value="1"/>
</dbReference>
<dbReference type="PROSITE" id="PS00527">
    <property type="entry name" value="RIBOSOMAL_S14"/>
    <property type="match status" value="1"/>
</dbReference>
<proteinExistence type="inferred from homology"/>
<comment type="function">
    <text evidence="1">Binds 16S rRNA, required for the assembly of 30S particles.</text>
</comment>
<comment type="subunit">
    <text evidence="1">Part of the 30S ribosomal subunit.</text>
</comment>
<comment type="subcellular location">
    <subcellularLocation>
        <location>Plastid</location>
        <location>Chloroplast</location>
    </subcellularLocation>
</comment>
<comment type="similarity">
    <text evidence="1">Belongs to the universal ribosomal protein uS14 family.</text>
</comment>
<feature type="chain" id="PRO_0000276699" description="Small ribosomal subunit protein uS14c">
    <location>
        <begin position="1"/>
        <end position="100"/>
    </location>
</feature>
<sequence>MAKKSMIEREKKRLKFVTKFKQKRYDLKKQIKKAEFLEEKLSLYAKLQKLPRNSSAVRLHNRCLISGRPKGYYRDFGLSRHVLREFGHNCLLPGLTKSSW</sequence>